<gene>
    <name evidence="1" type="primary">pstB</name>
    <name type="ordered locus">Francci3_4262</name>
</gene>
<name>PSTB_FRACC</name>
<dbReference type="EC" id="7.3.2.1" evidence="1"/>
<dbReference type="EMBL" id="CP000249">
    <property type="protein sequence ID" value="ABD13608.1"/>
    <property type="molecule type" value="Genomic_DNA"/>
</dbReference>
<dbReference type="RefSeq" id="WP_011438616.1">
    <property type="nucleotide sequence ID" value="NZ_JENI01000012.1"/>
</dbReference>
<dbReference type="SMR" id="Q2J534"/>
<dbReference type="STRING" id="106370.Francci3_4262"/>
<dbReference type="KEGG" id="fra:Francci3_4262"/>
<dbReference type="eggNOG" id="COG1117">
    <property type="taxonomic scope" value="Bacteria"/>
</dbReference>
<dbReference type="HOGENOM" id="CLU_000604_1_22_11"/>
<dbReference type="OrthoDB" id="4283894at2"/>
<dbReference type="PhylomeDB" id="Q2J534"/>
<dbReference type="Proteomes" id="UP000001937">
    <property type="component" value="Chromosome"/>
</dbReference>
<dbReference type="GO" id="GO:0005886">
    <property type="term" value="C:plasma membrane"/>
    <property type="evidence" value="ECO:0007669"/>
    <property type="project" value="UniProtKB-SubCell"/>
</dbReference>
<dbReference type="GO" id="GO:0005524">
    <property type="term" value="F:ATP binding"/>
    <property type="evidence" value="ECO:0007669"/>
    <property type="project" value="UniProtKB-KW"/>
</dbReference>
<dbReference type="GO" id="GO:0016887">
    <property type="term" value="F:ATP hydrolysis activity"/>
    <property type="evidence" value="ECO:0007669"/>
    <property type="project" value="InterPro"/>
</dbReference>
<dbReference type="GO" id="GO:0015415">
    <property type="term" value="F:ATPase-coupled phosphate ion transmembrane transporter activity"/>
    <property type="evidence" value="ECO:0007669"/>
    <property type="project" value="UniProtKB-EC"/>
</dbReference>
<dbReference type="GO" id="GO:0035435">
    <property type="term" value="P:phosphate ion transmembrane transport"/>
    <property type="evidence" value="ECO:0007669"/>
    <property type="project" value="InterPro"/>
</dbReference>
<dbReference type="CDD" id="cd03260">
    <property type="entry name" value="ABC_PstB_phosphate_transporter"/>
    <property type="match status" value="1"/>
</dbReference>
<dbReference type="Gene3D" id="3.40.50.300">
    <property type="entry name" value="P-loop containing nucleotide triphosphate hydrolases"/>
    <property type="match status" value="1"/>
</dbReference>
<dbReference type="InterPro" id="IPR003593">
    <property type="entry name" value="AAA+_ATPase"/>
</dbReference>
<dbReference type="InterPro" id="IPR003439">
    <property type="entry name" value="ABC_transporter-like_ATP-bd"/>
</dbReference>
<dbReference type="InterPro" id="IPR017871">
    <property type="entry name" value="ABC_transporter-like_CS"/>
</dbReference>
<dbReference type="InterPro" id="IPR027417">
    <property type="entry name" value="P-loop_NTPase"/>
</dbReference>
<dbReference type="InterPro" id="IPR005670">
    <property type="entry name" value="PstB-like"/>
</dbReference>
<dbReference type="NCBIfam" id="TIGR00972">
    <property type="entry name" value="3a0107s01c2"/>
    <property type="match status" value="1"/>
</dbReference>
<dbReference type="PANTHER" id="PTHR43423">
    <property type="entry name" value="ABC TRANSPORTER I FAMILY MEMBER 17"/>
    <property type="match status" value="1"/>
</dbReference>
<dbReference type="PANTHER" id="PTHR43423:SF1">
    <property type="entry name" value="ABC TRANSPORTER I FAMILY MEMBER 17"/>
    <property type="match status" value="1"/>
</dbReference>
<dbReference type="Pfam" id="PF00005">
    <property type="entry name" value="ABC_tran"/>
    <property type="match status" value="1"/>
</dbReference>
<dbReference type="SMART" id="SM00382">
    <property type="entry name" value="AAA"/>
    <property type="match status" value="1"/>
</dbReference>
<dbReference type="SUPFAM" id="SSF52540">
    <property type="entry name" value="P-loop containing nucleoside triphosphate hydrolases"/>
    <property type="match status" value="1"/>
</dbReference>
<dbReference type="PROSITE" id="PS00211">
    <property type="entry name" value="ABC_TRANSPORTER_1"/>
    <property type="match status" value="1"/>
</dbReference>
<dbReference type="PROSITE" id="PS50893">
    <property type="entry name" value="ABC_TRANSPORTER_2"/>
    <property type="match status" value="1"/>
</dbReference>
<dbReference type="PROSITE" id="PS51238">
    <property type="entry name" value="PSTB"/>
    <property type="match status" value="1"/>
</dbReference>
<evidence type="ECO:0000255" key="1">
    <source>
        <dbReference type="HAMAP-Rule" id="MF_01702"/>
    </source>
</evidence>
<keyword id="KW-0067">ATP-binding</keyword>
<keyword id="KW-1003">Cell membrane</keyword>
<keyword id="KW-0472">Membrane</keyword>
<keyword id="KW-0547">Nucleotide-binding</keyword>
<keyword id="KW-0592">Phosphate transport</keyword>
<keyword id="KW-1185">Reference proteome</keyword>
<keyword id="KW-1278">Translocase</keyword>
<keyword id="KW-0813">Transport</keyword>
<organism>
    <name type="scientific">Frankia casuarinae (strain DSM 45818 / CECT 9043 / HFP020203 / CcI3)</name>
    <dbReference type="NCBI Taxonomy" id="106370"/>
    <lineage>
        <taxon>Bacteria</taxon>
        <taxon>Bacillati</taxon>
        <taxon>Actinomycetota</taxon>
        <taxon>Actinomycetes</taxon>
        <taxon>Frankiales</taxon>
        <taxon>Frankiaceae</taxon>
        <taxon>Frankia</taxon>
    </lineage>
</organism>
<comment type="function">
    <text evidence="1">Part of the ABC transporter complex PstSACB involved in phosphate import. Responsible for energy coupling to the transport system.</text>
</comment>
<comment type="catalytic activity">
    <reaction evidence="1">
        <text>phosphate(out) + ATP + H2O = ADP + 2 phosphate(in) + H(+)</text>
        <dbReference type="Rhea" id="RHEA:24440"/>
        <dbReference type="ChEBI" id="CHEBI:15377"/>
        <dbReference type="ChEBI" id="CHEBI:15378"/>
        <dbReference type="ChEBI" id="CHEBI:30616"/>
        <dbReference type="ChEBI" id="CHEBI:43474"/>
        <dbReference type="ChEBI" id="CHEBI:456216"/>
        <dbReference type="EC" id="7.3.2.1"/>
    </reaction>
</comment>
<comment type="subunit">
    <text evidence="1">The complex is composed of two ATP-binding proteins (PstB), two transmembrane proteins (PstC and PstA) and a solute-binding protein (PstS).</text>
</comment>
<comment type="subcellular location">
    <subcellularLocation>
        <location evidence="1">Cell membrane</location>
        <topology evidence="1">Peripheral membrane protein</topology>
    </subcellularLocation>
</comment>
<comment type="similarity">
    <text evidence="1">Belongs to the ABC transporter superfamily. Phosphate importer (TC 3.A.1.7) family.</text>
</comment>
<protein>
    <recommendedName>
        <fullName evidence="1">Phosphate import ATP-binding protein PstB</fullName>
        <ecNumber evidence="1">7.3.2.1</ecNumber>
    </recommendedName>
    <alternativeName>
        <fullName evidence="1">ABC phosphate transporter</fullName>
    </alternativeName>
    <alternativeName>
        <fullName evidence="1">Phosphate-transporting ATPase</fullName>
    </alternativeName>
</protein>
<feature type="chain" id="PRO_0000272454" description="Phosphate import ATP-binding protein PstB">
    <location>
        <begin position="1"/>
        <end position="258"/>
    </location>
</feature>
<feature type="domain" description="ABC transporter" evidence="1">
    <location>
        <begin position="5"/>
        <end position="247"/>
    </location>
</feature>
<feature type="binding site" evidence="1">
    <location>
        <begin position="37"/>
        <end position="44"/>
    </location>
    <ligand>
        <name>ATP</name>
        <dbReference type="ChEBI" id="CHEBI:30616"/>
    </ligand>
</feature>
<proteinExistence type="inferred from homology"/>
<accession>Q2J534</accession>
<reference key="1">
    <citation type="journal article" date="2007" name="Genome Res.">
        <title>Genome characteristics of facultatively symbiotic Frankia sp. strains reflect host range and host plant biogeography.</title>
        <authorList>
            <person name="Normand P."/>
            <person name="Lapierre P."/>
            <person name="Tisa L.S."/>
            <person name="Gogarten J.P."/>
            <person name="Alloisio N."/>
            <person name="Bagnarol E."/>
            <person name="Bassi C.A."/>
            <person name="Berry A.M."/>
            <person name="Bickhart D.M."/>
            <person name="Choisne N."/>
            <person name="Couloux A."/>
            <person name="Cournoyer B."/>
            <person name="Cruveiller S."/>
            <person name="Daubin V."/>
            <person name="Demange N."/>
            <person name="Francino M.P."/>
            <person name="Goltsman E."/>
            <person name="Huang Y."/>
            <person name="Kopp O.R."/>
            <person name="Labarre L."/>
            <person name="Lapidus A."/>
            <person name="Lavire C."/>
            <person name="Marechal J."/>
            <person name="Martinez M."/>
            <person name="Mastronunzio J.E."/>
            <person name="Mullin B.C."/>
            <person name="Niemann J."/>
            <person name="Pujic P."/>
            <person name="Rawnsley T."/>
            <person name="Rouy Z."/>
            <person name="Schenowitz C."/>
            <person name="Sellstedt A."/>
            <person name="Tavares F."/>
            <person name="Tomkins J.P."/>
            <person name="Vallenet D."/>
            <person name="Valverde C."/>
            <person name="Wall L.G."/>
            <person name="Wang Y."/>
            <person name="Medigue C."/>
            <person name="Benson D.R."/>
        </authorList>
    </citation>
    <scope>NUCLEOTIDE SEQUENCE [LARGE SCALE GENOMIC DNA]</scope>
    <source>
        <strain>DSM 45818 / CECT 9043 / HFP020203 / CcI3</strain>
    </source>
</reference>
<sequence>MATRIDVSGLTAYYGKFKAVADVNLTIEPKNVTAFIGPSGCGKSTVLRTLNRMHEVLPGARVEGQVLLDGEDLYGPGMDPVAVRRTVGMVFQRPNPFPTMSIYENVIAGLKLNGVRKKALLDERVEESLRGANLWEEVKDRLGRPGAGLSGGQQQRLCIARAIAVEPQVLLMDEPCSALDPISTLAIEDLIAKLKSSFTIVIVTHNMQQASRVSDSTAFFSLEKTGDPGRLVEYDKTSQIFSNPKEKRTEDYISGRFG</sequence>